<accession>P0C5I1</accession>
<comment type="function">
    <text>Orphan receptor.</text>
</comment>
<comment type="subcellular location">
    <subcellularLocation>
        <location evidence="4">Membrane</location>
        <topology evidence="4">Multi-pass membrane protein</topology>
    </subcellularLocation>
</comment>
<comment type="similarity">
    <text evidence="2">Belongs to the G-protein coupled receptor 1 family.</text>
</comment>
<keyword id="KW-1015">Disulfide bond</keyword>
<keyword id="KW-0297">G-protein coupled receptor</keyword>
<keyword id="KW-0472">Membrane</keyword>
<keyword id="KW-0675">Receptor</keyword>
<keyword id="KW-1185">Reference proteome</keyword>
<keyword id="KW-0807">Transducer</keyword>
<keyword id="KW-0812">Transmembrane</keyword>
<keyword id="KW-1133">Transmembrane helix</keyword>
<evidence type="ECO:0000255" key="1"/>
<evidence type="ECO:0000255" key="2">
    <source>
        <dbReference type="PROSITE-ProRule" id="PRU00521"/>
    </source>
</evidence>
<evidence type="ECO:0000256" key="3">
    <source>
        <dbReference type="SAM" id="MobiDB-lite"/>
    </source>
</evidence>
<evidence type="ECO:0000305" key="4"/>
<proteinExistence type="inferred from homology"/>
<organism>
    <name type="scientific">Mus musculus</name>
    <name type="common">Mouse</name>
    <dbReference type="NCBI Taxonomy" id="10090"/>
    <lineage>
        <taxon>Eukaryota</taxon>
        <taxon>Metazoa</taxon>
        <taxon>Chordata</taxon>
        <taxon>Craniata</taxon>
        <taxon>Vertebrata</taxon>
        <taxon>Euteleostomi</taxon>
        <taxon>Mammalia</taxon>
        <taxon>Eutheria</taxon>
        <taxon>Euarchontoglires</taxon>
        <taxon>Glires</taxon>
        <taxon>Rodentia</taxon>
        <taxon>Myomorpha</taxon>
        <taxon>Muroidea</taxon>
        <taxon>Muridae</taxon>
        <taxon>Murinae</taxon>
        <taxon>Mus</taxon>
        <taxon>Mus</taxon>
    </lineage>
</organism>
<dbReference type="EMBL" id="AC124550">
    <property type="status" value="NOT_ANNOTATED_CDS"/>
    <property type="molecule type" value="Genomic_DNA"/>
</dbReference>
<dbReference type="CCDS" id="CCDS48381.1"/>
<dbReference type="RefSeq" id="NP_001094986.1">
    <property type="nucleotide sequence ID" value="NM_001101516.2"/>
</dbReference>
<dbReference type="SMR" id="P0C5I1"/>
<dbReference type="FunCoup" id="P0C5I1">
    <property type="interactions" value="57"/>
</dbReference>
<dbReference type="STRING" id="10090.ENSMUSP00000083583"/>
<dbReference type="PhosphoSitePlus" id="P0C5I1"/>
<dbReference type="PaxDb" id="10090-ENSMUSP00000083583"/>
<dbReference type="Antibodypedia" id="20636">
    <property type="antibodies" value="171 antibodies from 27 providers"/>
</dbReference>
<dbReference type="Ensembl" id="ENSMUST00000086395.7">
    <property type="protein sequence ID" value="ENSMUSP00000083583.6"/>
    <property type="gene ID" value="ENSMUSG00000052759.8"/>
</dbReference>
<dbReference type="GeneID" id="383563"/>
<dbReference type="KEGG" id="mmu:383563"/>
<dbReference type="UCSC" id="uc011wsy.1">
    <property type="organism name" value="mouse"/>
</dbReference>
<dbReference type="AGR" id="MGI:2686146"/>
<dbReference type="CTD" id="2848"/>
<dbReference type="MGI" id="MGI:2686146">
    <property type="gene designation" value="Gpr25"/>
</dbReference>
<dbReference type="VEuPathDB" id="HostDB:ENSMUSG00000052759"/>
<dbReference type="eggNOG" id="KOG3656">
    <property type="taxonomic scope" value="Eukaryota"/>
</dbReference>
<dbReference type="GeneTree" id="ENSGT01130000278303"/>
<dbReference type="HOGENOM" id="CLU_009579_8_1_1"/>
<dbReference type="InParanoid" id="P0C5I1"/>
<dbReference type="OMA" id="IYVFMDQ"/>
<dbReference type="OrthoDB" id="8935849at2759"/>
<dbReference type="PhylomeDB" id="P0C5I1"/>
<dbReference type="TreeFam" id="TF330024"/>
<dbReference type="Reactome" id="R-MMU-418555">
    <property type="pathway name" value="G alpha (s) signalling events"/>
</dbReference>
<dbReference type="BioGRID-ORCS" id="383563">
    <property type="hits" value="5 hits in 76 CRISPR screens"/>
</dbReference>
<dbReference type="PRO" id="PR:P0C5I1"/>
<dbReference type="Proteomes" id="UP000000589">
    <property type="component" value="Chromosome 1"/>
</dbReference>
<dbReference type="RNAct" id="P0C5I1">
    <property type="molecule type" value="protein"/>
</dbReference>
<dbReference type="Bgee" id="ENSMUSG00000052759">
    <property type="expression patterns" value="Expressed in prefrontal cortex and 37 other cell types or tissues"/>
</dbReference>
<dbReference type="GO" id="GO:0016020">
    <property type="term" value="C:membrane"/>
    <property type="evidence" value="ECO:0007669"/>
    <property type="project" value="UniProtKB-SubCell"/>
</dbReference>
<dbReference type="GO" id="GO:0004930">
    <property type="term" value="F:G protein-coupled receptor activity"/>
    <property type="evidence" value="ECO:0007669"/>
    <property type="project" value="UniProtKB-KW"/>
</dbReference>
<dbReference type="FunFam" id="1.20.1070.10:FF:000276">
    <property type="entry name" value="G protein-coupled receptor 25"/>
    <property type="match status" value="1"/>
</dbReference>
<dbReference type="Gene3D" id="1.20.1070.10">
    <property type="entry name" value="Rhodopsin 7-helix transmembrane proteins"/>
    <property type="match status" value="1"/>
</dbReference>
<dbReference type="InterPro" id="IPR050119">
    <property type="entry name" value="CCR1-9-like"/>
</dbReference>
<dbReference type="InterPro" id="IPR000276">
    <property type="entry name" value="GPCR_Rhodpsn"/>
</dbReference>
<dbReference type="InterPro" id="IPR017452">
    <property type="entry name" value="GPCR_Rhodpsn_7TM"/>
</dbReference>
<dbReference type="PANTHER" id="PTHR10489">
    <property type="entry name" value="CELL ADHESION MOLECULE"/>
    <property type="match status" value="1"/>
</dbReference>
<dbReference type="PANTHER" id="PTHR10489:SF954">
    <property type="entry name" value="G PROTEIN-COUPLED RECEPTOR 25"/>
    <property type="match status" value="1"/>
</dbReference>
<dbReference type="Pfam" id="PF00001">
    <property type="entry name" value="7tm_1"/>
    <property type="match status" value="1"/>
</dbReference>
<dbReference type="PRINTS" id="PR00237">
    <property type="entry name" value="GPCRRHODOPSN"/>
</dbReference>
<dbReference type="SUPFAM" id="SSF81321">
    <property type="entry name" value="Family A G protein-coupled receptor-like"/>
    <property type="match status" value="1"/>
</dbReference>
<dbReference type="PROSITE" id="PS00237">
    <property type="entry name" value="G_PROTEIN_RECEP_F1_1"/>
    <property type="match status" value="1"/>
</dbReference>
<dbReference type="PROSITE" id="PS50262">
    <property type="entry name" value="G_PROTEIN_RECEP_F1_2"/>
    <property type="match status" value="1"/>
</dbReference>
<feature type="chain" id="PRO_0000307093" description="Probable G-protein coupled receptor 25">
    <location>
        <begin position="1"/>
        <end position="358"/>
    </location>
</feature>
<feature type="topological domain" description="Extracellular" evidence="1">
    <location>
        <begin position="1"/>
        <end position="43"/>
    </location>
</feature>
<feature type="transmembrane region" description="Helical; Name=1" evidence="1">
    <location>
        <begin position="44"/>
        <end position="64"/>
    </location>
</feature>
<feature type="topological domain" description="Cytoplasmic" evidence="1">
    <location>
        <begin position="65"/>
        <end position="76"/>
    </location>
</feature>
<feature type="transmembrane region" description="Helical; Name=2" evidence="1">
    <location>
        <begin position="77"/>
        <end position="97"/>
    </location>
</feature>
<feature type="topological domain" description="Extracellular" evidence="1">
    <location>
        <begin position="98"/>
        <end position="113"/>
    </location>
</feature>
<feature type="transmembrane region" description="Helical; Name=3" evidence="1">
    <location>
        <begin position="114"/>
        <end position="134"/>
    </location>
</feature>
<feature type="topological domain" description="Cytoplasmic" evidence="1">
    <location>
        <begin position="135"/>
        <end position="155"/>
    </location>
</feature>
<feature type="transmembrane region" description="Helical; Name=4" evidence="1">
    <location>
        <begin position="156"/>
        <end position="176"/>
    </location>
</feature>
<feature type="topological domain" description="Extracellular" evidence="1">
    <location>
        <begin position="177"/>
        <end position="200"/>
    </location>
</feature>
<feature type="transmembrane region" description="Helical; Name=5" evidence="1">
    <location>
        <begin position="201"/>
        <end position="221"/>
    </location>
</feature>
<feature type="topological domain" description="Cytoplasmic" evidence="1">
    <location>
        <begin position="222"/>
        <end position="239"/>
    </location>
</feature>
<feature type="transmembrane region" description="Helical; Name=6" evidence="1">
    <location>
        <begin position="240"/>
        <end position="260"/>
    </location>
</feature>
<feature type="topological domain" description="Extracellular" evidence="1">
    <location>
        <begin position="261"/>
        <end position="284"/>
    </location>
</feature>
<feature type="transmembrane region" description="Helical; Name=7" evidence="1">
    <location>
        <begin position="285"/>
        <end position="307"/>
    </location>
</feature>
<feature type="topological domain" description="Cytoplasmic" evidence="1">
    <location>
        <begin position="308"/>
        <end position="358"/>
    </location>
</feature>
<feature type="region of interest" description="Disordered" evidence="3">
    <location>
        <begin position="339"/>
        <end position="358"/>
    </location>
</feature>
<feature type="disulfide bond" evidence="2">
    <location>
        <begin position="112"/>
        <end position="191"/>
    </location>
</feature>
<gene>
    <name type="primary">Gpr25</name>
    <name type="synonym">Gm1300</name>
</gene>
<name>GPR25_MOUSE</name>
<protein>
    <recommendedName>
        <fullName>Probable G-protein coupled receptor 25</fullName>
    </recommendedName>
</protein>
<reference key="1">
    <citation type="journal article" date="2009" name="PLoS Biol.">
        <title>Lineage-specific biology revealed by a finished genome assembly of the mouse.</title>
        <authorList>
            <person name="Church D.M."/>
            <person name="Goodstadt L."/>
            <person name="Hillier L.W."/>
            <person name="Zody M.C."/>
            <person name="Goldstein S."/>
            <person name="She X."/>
            <person name="Bult C.J."/>
            <person name="Agarwala R."/>
            <person name="Cherry J.L."/>
            <person name="DiCuccio M."/>
            <person name="Hlavina W."/>
            <person name="Kapustin Y."/>
            <person name="Meric P."/>
            <person name="Maglott D."/>
            <person name="Birtle Z."/>
            <person name="Marques A.C."/>
            <person name="Graves T."/>
            <person name="Zhou S."/>
            <person name="Teague B."/>
            <person name="Potamousis K."/>
            <person name="Churas C."/>
            <person name="Place M."/>
            <person name="Herschleb J."/>
            <person name="Runnheim R."/>
            <person name="Forrest D."/>
            <person name="Amos-Landgraf J."/>
            <person name="Schwartz D.C."/>
            <person name="Cheng Z."/>
            <person name="Lindblad-Toh K."/>
            <person name="Eichler E.E."/>
            <person name="Ponting C.P."/>
        </authorList>
    </citation>
    <scope>NUCLEOTIDE SEQUENCE [LARGE SCALE GENOMIC DNA]</scope>
    <source>
        <strain>C57BL/6J</strain>
    </source>
</reference>
<sequence>MQSTEPWSPSWGTLSWDYSGSGSLDQVELCPAWNLPYGHAIIPALYLAAFAVGLPGNAFVVWLLSRQRGPRRLVDTFVLHLAAADLGFVLTLPLWAAAEARGGLWPFGDGLCKVSSFALAVTRCAGALLLAGMSVDRYLAVGRPLSARPLRSARCVRAVCGAAWAAAFLAGLPALLYRGLQPSLDGVGSQCAEEPWEALQGVGLLLLLLTFALPLAVTLICYWRVSRRLPRVGRARSNSLRIIFTVESVFVGCWLPFGVLRSLFHLARLQALPLPCSLLLALRWGLTVTTCLAFVNSSANPVIYLLLDRSFRARARFGLCARAGRQVRRISSASSLSRDDSSVFRGRSPKVNSASATW</sequence>